<protein>
    <recommendedName>
        <fullName evidence="1">Histidine--tRNA ligase</fullName>
        <ecNumber evidence="1">6.1.1.21</ecNumber>
    </recommendedName>
    <alternativeName>
        <fullName evidence="1">Histidyl-tRNA synthetase</fullName>
        <shortName evidence="1">HisRS</shortName>
    </alternativeName>
</protein>
<feature type="chain" id="PRO_1000199153" description="Histidine--tRNA ligase">
    <location>
        <begin position="1"/>
        <end position="426"/>
    </location>
</feature>
<dbReference type="EC" id="6.1.1.21" evidence="1"/>
<dbReference type="EMBL" id="FM204883">
    <property type="protein sequence ID" value="CAW95552.1"/>
    <property type="molecule type" value="Genomic_DNA"/>
</dbReference>
<dbReference type="RefSeq" id="WP_015898677.1">
    <property type="nucleotide sequence ID" value="NC_012471.1"/>
</dbReference>
<dbReference type="SMR" id="C0MB21"/>
<dbReference type="KEGG" id="seu:SEQ_2174"/>
<dbReference type="HOGENOM" id="CLU_025113_1_1_9"/>
<dbReference type="OrthoDB" id="9800814at2"/>
<dbReference type="Proteomes" id="UP000001365">
    <property type="component" value="Chromosome"/>
</dbReference>
<dbReference type="GO" id="GO:0005737">
    <property type="term" value="C:cytoplasm"/>
    <property type="evidence" value="ECO:0007669"/>
    <property type="project" value="UniProtKB-SubCell"/>
</dbReference>
<dbReference type="GO" id="GO:0005524">
    <property type="term" value="F:ATP binding"/>
    <property type="evidence" value="ECO:0007669"/>
    <property type="project" value="UniProtKB-UniRule"/>
</dbReference>
<dbReference type="GO" id="GO:0140096">
    <property type="term" value="F:catalytic activity, acting on a protein"/>
    <property type="evidence" value="ECO:0007669"/>
    <property type="project" value="UniProtKB-ARBA"/>
</dbReference>
<dbReference type="GO" id="GO:0004821">
    <property type="term" value="F:histidine-tRNA ligase activity"/>
    <property type="evidence" value="ECO:0007669"/>
    <property type="project" value="UniProtKB-UniRule"/>
</dbReference>
<dbReference type="GO" id="GO:0016740">
    <property type="term" value="F:transferase activity"/>
    <property type="evidence" value="ECO:0007669"/>
    <property type="project" value="UniProtKB-ARBA"/>
</dbReference>
<dbReference type="GO" id="GO:0006427">
    <property type="term" value="P:histidyl-tRNA aminoacylation"/>
    <property type="evidence" value="ECO:0007669"/>
    <property type="project" value="UniProtKB-UniRule"/>
</dbReference>
<dbReference type="CDD" id="cd00773">
    <property type="entry name" value="HisRS-like_core"/>
    <property type="match status" value="1"/>
</dbReference>
<dbReference type="CDD" id="cd00859">
    <property type="entry name" value="HisRS_anticodon"/>
    <property type="match status" value="1"/>
</dbReference>
<dbReference type="FunFam" id="3.30.930.10:FF:000005">
    <property type="entry name" value="Histidine--tRNA ligase"/>
    <property type="match status" value="1"/>
</dbReference>
<dbReference type="Gene3D" id="3.40.50.800">
    <property type="entry name" value="Anticodon-binding domain"/>
    <property type="match status" value="1"/>
</dbReference>
<dbReference type="Gene3D" id="3.30.930.10">
    <property type="entry name" value="Bira Bifunctional Protein, Domain 2"/>
    <property type="match status" value="1"/>
</dbReference>
<dbReference type="HAMAP" id="MF_00127">
    <property type="entry name" value="His_tRNA_synth"/>
    <property type="match status" value="1"/>
</dbReference>
<dbReference type="InterPro" id="IPR006195">
    <property type="entry name" value="aa-tRNA-synth_II"/>
</dbReference>
<dbReference type="InterPro" id="IPR045864">
    <property type="entry name" value="aa-tRNA-synth_II/BPL/LPL"/>
</dbReference>
<dbReference type="InterPro" id="IPR004154">
    <property type="entry name" value="Anticodon-bd"/>
</dbReference>
<dbReference type="InterPro" id="IPR036621">
    <property type="entry name" value="Anticodon-bd_dom_sf"/>
</dbReference>
<dbReference type="InterPro" id="IPR015807">
    <property type="entry name" value="His-tRNA-ligase"/>
</dbReference>
<dbReference type="InterPro" id="IPR041715">
    <property type="entry name" value="HisRS-like_core"/>
</dbReference>
<dbReference type="InterPro" id="IPR004516">
    <property type="entry name" value="HisRS/HisZ"/>
</dbReference>
<dbReference type="InterPro" id="IPR033656">
    <property type="entry name" value="HisRS_anticodon"/>
</dbReference>
<dbReference type="NCBIfam" id="TIGR00442">
    <property type="entry name" value="hisS"/>
    <property type="match status" value="1"/>
</dbReference>
<dbReference type="PANTHER" id="PTHR43707:SF1">
    <property type="entry name" value="HISTIDINE--TRNA LIGASE, MITOCHONDRIAL-RELATED"/>
    <property type="match status" value="1"/>
</dbReference>
<dbReference type="PANTHER" id="PTHR43707">
    <property type="entry name" value="HISTIDYL-TRNA SYNTHETASE"/>
    <property type="match status" value="1"/>
</dbReference>
<dbReference type="Pfam" id="PF03129">
    <property type="entry name" value="HGTP_anticodon"/>
    <property type="match status" value="1"/>
</dbReference>
<dbReference type="Pfam" id="PF13393">
    <property type="entry name" value="tRNA-synt_His"/>
    <property type="match status" value="1"/>
</dbReference>
<dbReference type="PIRSF" id="PIRSF001549">
    <property type="entry name" value="His-tRNA_synth"/>
    <property type="match status" value="1"/>
</dbReference>
<dbReference type="SUPFAM" id="SSF52954">
    <property type="entry name" value="Class II aaRS ABD-related"/>
    <property type="match status" value="1"/>
</dbReference>
<dbReference type="SUPFAM" id="SSF55681">
    <property type="entry name" value="Class II aaRS and biotin synthetases"/>
    <property type="match status" value="1"/>
</dbReference>
<dbReference type="PROSITE" id="PS50862">
    <property type="entry name" value="AA_TRNA_LIGASE_II"/>
    <property type="match status" value="1"/>
</dbReference>
<organism>
    <name type="scientific">Streptococcus equi subsp. equi (strain 4047)</name>
    <dbReference type="NCBI Taxonomy" id="553482"/>
    <lineage>
        <taxon>Bacteria</taxon>
        <taxon>Bacillati</taxon>
        <taxon>Bacillota</taxon>
        <taxon>Bacilli</taxon>
        <taxon>Lactobacillales</taxon>
        <taxon>Streptococcaceae</taxon>
        <taxon>Streptococcus</taxon>
    </lineage>
</organism>
<evidence type="ECO:0000255" key="1">
    <source>
        <dbReference type="HAMAP-Rule" id="MF_00127"/>
    </source>
</evidence>
<sequence>MKLQKPKGTQDILPVAAAKWQYVEGVARETFKQYHYGEIRTPMFEHYEVISRSVGDTTDIVTKEMYDFYDKGDRHITLRPEGTAPVVRSYVENKLFAPEVQKPVKLYYIGSMFRYERPQAGRLREFHQIGVECFGSANPATDVETIAMAYHLFERLGIKEVTLHLNSLGNAASRAAYRQALIDYLSPMRETLSKDSQRRLDENPLRVLDSKEKEDKIAVANAPSILDYLDEESQAHFDAVRSMLEVLAIPYVIDTNMVRGLDYYNHTIFEFITEVDQSELTICAGGRYDGLVEYFGGPATPGFGFGLGLERLLLILDKQGVELPVEEGLDVYIAVLGAYANVAALALTQAIRRQGFTVERDYLGRKIKAQFKSADAFKAKVVITLGESEIKTGQAVLKHNQTRQEMTVSFDQIQTNFASIFAECIQ</sequence>
<name>SYH_STRE4</name>
<keyword id="KW-0030">Aminoacyl-tRNA synthetase</keyword>
<keyword id="KW-0067">ATP-binding</keyword>
<keyword id="KW-0963">Cytoplasm</keyword>
<keyword id="KW-0436">Ligase</keyword>
<keyword id="KW-0547">Nucleotide-binding</keyword>
<keyword id="KW-0648">Protein biosynthesis</keyword>
<gene>
    <name evidence="1" type="primary">hisS</name>
    <name type="ordered locus">SEQ_2174</name>
</gene>
<reference key="1">
    <citation type="journal article" date="2009" name="PLoS Pathog.">
        <title>Genomic evidence for the evolution of Streptococcus equi: host restriction, increased virulence, and genetic exchange with human pathogens.</title>
        <authorList>
            <person name="Holden M.T.G."/>
            <person name="Heather Z."/>
            <person name="Paillot R."/>
            <person name="Steward K.F."/>
            <person name="Webb K."/>
            <person name="Ainslie F."/>
            <person name="Jourdan T."/>
            <person name="Bason N.C."/>
            <person name="Holroyd N.E."/>
            <person name="Mungall K."/>
            <person name="Quail M.A."/>
            <person name="Sanders M."/>
            <person name="Simmonds M."/>
            <person name="Willey D."/>
            <person name="Brooks K."/>
            <person name="Aanensen D.M."/>
            <person name="Spratt B.G."/>
            <person name="Jolley K.A."/>
            <person name="Maiden M.C.J."/>
            <person name="Kehoe M."/>
            <person name="Chanter N."/>
            <person name="Bentley S.D."/>
            <person name="Robinson C."/>
            <person name="Maskell D.J."/>
            <person name="Parkhill J."/>
            <person name="Waller A.S."/>
        </authorList>
    </citation>
    <scope>NUCLEOTIDE SEQUENCE [LARGE SCALE GENOMIC DNA]</scope>
    <source>
        <strain>4047</strain>
    </source>
</reference>
<accession>C0MB21</accession>
<comment type="catalytic activity">
    <reaction evidence="1">
        <text>tRNA(His) + L-histidine + ATP = L-histidyl-tRNA(His) + AMP + diphosphate + H(+)</text>
        <dbReference type="Rhea" id="RHEA:17313"/>
        <dbReference type="Rhea" id="RHEA-COMP:9665"/>
        <dbReference type="Rhea" id="RHEA-COMP:9689"/>
        <dbReference type="ChEBI" id="CHEBI:15378"/>
        <dbReference type="ChEBI" id="CHEBI:30616"/>
        <dbReference type="ChEBI" id="CHEBI:33019"/>
        <dbReference type="ChEBI" id="CHEBI:57595"/>
        <dbReference type="ChEBI" id="CHEBI:78442"/>
        <dbReference type="ChEBI" id="CHEBI:78527"/>
        <dbReference type="ChEBI" id="CHEBI:456215"/>
        <dbReference type="EC" id="6.1.1.21"/>
    </reaction>
</comment>
<comment type="subunit">
    <text evidence="1">Homodimer.</text>
</comment>
<comment type="subcellular location">
    <subcellularLocation>
        <location evidence="1">Cytoplasm</location>
    </subcellularLocation>
</comment>
<comment type="similarity">
    <text evidence="1">Belongs to the class-II aminoacyl-tRNA synthetase family.</text>
</comment>
<proteinExistence type="inferred from homology"/>